<reference key="1">
    <citation type="submission" date="2001-07" db="EMBL/GenBank/DDBJ databases">
        <title>Genome-wide discovery and analysis of human seven transmembrane helix receptor genes.</title>
        <authorList>
            <person name="Suwa M."/>
            <person name="Sato T."/>
            <person name="Okouchi I."/>
            <person name="Arita M."/>
            <person name="Futami K."/>
            <person name="Matsumoto S."/>
            <person name="Tsutsumi S."/>
            <person name="Aburatani H."/>
            <person name="Asai K."/>
            <person name="Akiyama Y."/>
        </authorList>
    </citation>
    <scope>NUCLEOTIDE SEQUENCE [GENOMIC DNA]</scope>
</reference>
<reference key="2">
    <citation type="journal article" date="2004" name="Genome Res.">
        <title>The status, quality, and expansion of the NIH full-length cDNA project: the Mammalian Gene Collection (MGC).</title>
        <authorList>
            <consortium name="The MGC Project Team"/>
        </authorList>
    </citation>
    <scope>NUCLEOTIDE SEQUENCE [LARGE SCALE MRNA]</scope>
    <source>
        <tissue>Brain</tissue>
        <tissue>Testis</tissue>
    </source>
</reference>
<reference key="3">
    <citation type="journal article" date="2002" name="Genomics">
        <title>DEFOG: a practical scheme for deciphering families of genes.</title>
        <authorList>
            <person name="Fuchs T."/>
            <person name="Malecova B."/>
            <person name="Linhart C."/>
            <person name="Sharan R."/>
            <person name="Khen M."/>
            <person name="Herwig R."/>
            <person name="Shmulevich D."/>
            <person name="Elkon R."/>
            <person name="Steinfath M."/>
            <person name="O'Brien J.K."/>
            <person name="Radelof U."/>
            <person name="Lehrach H."/>
            <person name="Lancet D."/>
            <person name="Shamir R."/>
        </authorList>
    </citation>
    <scope>NUCLEOTIDE SEQUENCE [GENOMIC DNA] OF 72-288</scope>
</reference>
<evidence type="ECO:0000255" key="1"/>
<evidence type="ECO:0000255" key="2">
    <source>
        <dbReference type="PROSITE-ProRule" id="PRU00521"/>
    </source>
</evidence>
<evidence type="ECO:0000305" key="3"/>
<comment type="function">
    <text evidence="3">Odorant receptor.</text>
</comment>
<comment type="subcellular location">
    <subcellularLocation>
        <location>Cell membrane</location>
        <topology>Multi-pass membrane protein</topology>
    </subcellularLocation>
</comment>
<comment type="similarity">
    <text evidence="2">Belongs to the G-protein coupled receptor 1 family.</text>
</comment>
<comment type="online information" name="Human Olfactory Receptor Data Exploratorium (HORDE)">
    <link uri="http://genome.weizmann.ac.il/horde/card/index/symbol:OR5C1"/>
</comment>
<feature type="chain" id="PRO_0000150590" description="Olfactory receptor 5C1">
    <location>
        <begin position="1"/>
        <end position="320"/>
    </location>
</feature>
<feature type="topological domain" description="Extracellular" evidence="1">
    <location>
        <begin position="1"/>
        <end position="29"/>
    </location>
</feature>
<feature type="transmembrane region" description="Helical; Name=1" evidence="1">
    <location>
        <begin position="30"/>
        <end position="50"/>
    </location>
</feature>
<feature type="topological domain" description="Cytoplasmic" evidence="1">
    <location>
        <begin position="51"/>
        <end position="58"/>
    </location>
</feature>
<feature type="transmembrane region" description="Helical; Name=2" evidence="1">
    <location>
        <begin position="59"/>
        <end position="79"/>
    </location>
</feature>
<feature type="topological domain" description="Extracellular" evidence="1">
    <location>
        <begin position="80"/>
        <end position="103"/>
    </location>
</feature>
<feature type="transmembrane region" description="Helical; Name=3" evidence="1">
    <location>
        <begin position="104"/>
        <end position="124"/>
    </location>
</feature>
<feature type="topological domain" description="Cytoplasmic" evidence="1">
    <location>
        <begin position="125"/>
        <end position="143"/>
    </location>
</feature>
<feature type="transmembrane region" description="Helical; Name=4" evidence="1">
    <location>
        <begin position="144"/>
        <end position="164"/>
    </location>
</feature>
<feature type="topological domain" description="Extracellular" evidence="1">
    <location>
        <begin position="165"/>
        <end position="200"/>
    </location>
</feature>
<feature type="transmembrane region" description="Helical; Name=5" evidence="1">
    <location>
        <begin position="201"/>
        <end position="221"/>
    </location>
</feature>
<feature type="topological domain" description="Cytoplasmic" evidence="1">
    <location>
        <begin position="222"/>
        <end position="241"/>
    </location>
</feature>
<feature type="transmembrane region" description="Helical; Name=6" evidence="1">
    <location>
        <begin position="242"/>
        <end position="262"/>
    </location>
</feature>
<feature type="topological domain" description="Extracellular" evidence="1">
    <location>
        <begin position="263"/>
        <end position="275"/>
    </location>
</feature>
<feature type="transmembrane region" description="Helical; Name=7" evidence="1">
    <location>
        <begin position="276"/>
        <end position="296"/>
    </location>
</feature>
<feature type="topological domain" description="Cytoplasmic" evidence="1">
    <location>
        <begin position="297"/>
        <end position="320"/>
    </location>
</feature>
<feature type="glycosylation site" description="N-linked (GlcNAc...) asparagine" evidence="1">
    <location>
        <position position="5"/>
    </location>
</feature>
<feature type="disulfide bond" evidence="2">
    <location>
        <begin position="101"/>
        <end position="193"/>
    </location>
</feature>
<protein>
    <recommendedName>
        <fullName>Olfactory receptor 5C1</fullName>
    </recommendedName>
    <alternativeName>
        <fullName>Olfactory receptor 5C2</fullName>
    </alternativeName>
    <alternativeName>
        <fullName>Olfactory receptor 9-F</fullName>
        <shortName>OR9-F</shortName>
    </alternativeName>
</protein>
<dbReference type="EMBL" id="AB065725">
    <property type="protein sequence ID" value="BAC05946.1"/>
    <property type="molecule type" value="Genomic_DNA"/>
</dbReference>
<dbReference type="EMBL" id="BC136700">
    <property type="protein sequence ID" value="AAI36701.1"/>
    <property type="molecule type" value="mRNA"/>
</dbReference>
<dbReference type="EMBL" id="BC136701">
    <property type="protein sequence ID" value="AAI36702.1"/>
    <property type="molecule type" value="mRNA"/>
</dbReference>
<dbReference type="EMBL" id="AF399514">
    <property type="protein sequence ID" value="AAK94999.1"/>
    <property type="molecule type" value="Genomic_DNA"/>
</dbReference>
<dbReference type="CCDS" id="CCDS35131.1"/>
<dbReference type="RefSeq" id="NP_001001923.1">
    <property type="nucleotide sequence ID" value="NM_001001923.1"/>
</dbReference>
<dbReference type="SMR" id="Q8NGR4"/>
<dbReference type="BioGRID" id="134202">
    <property type="interactions" value="7"/>
</dbReference>
<dbReference type="FunCoup" id="Q8NGR4">
    <property type="interactions" value="418"/>
</dbReference>
<dbReference type="IntAct" id="Q8NGR4">
    <property type="interactions" value="5"/>
</dbReference>
<dbReference type="STRING" id="9606.ENSP00000362784"/>
<dbReference type="GlyCosmos" id="Q8NGR4">
    <property type="glycosylation" value="1 site, No reported glycans"/>
</dbReference>
<dbReference type="GlyGen" id="Q8NGR4">
    <property type="glycosylation" value="1 site"/>
</dbReference>
<dbReference type="iPTMnet" id="Q8NGR4"/>
<dbReference type="PhosphoSitePlus" id="Q8NGR4"/>
<dbReference type="BioMuta" id="OR5C1"/>
<dbReference type="DMDM" id="38372754"/>
<dbReference type="MassIVE" id="Q8NGR4"/>
<dbReference type="PaxDb" id="9606-ENSP00000362784"/>
<dbReference type="Antibodypedia" id="72100">
    <property type="antibodies" value="13 antibodies from 8 providers"/>
</dbReference>
<dbReference type="DNASU" id="392391"/>
<dbReference type="Ensembl" id="ENST00000373680.3">
    <property type="protein sequence ID" value="ENSP00000362784.2"/>
    <property type="gene ID" value="ENSG00000148215.4"/>
</dbReference>
<dbReference type="GeneID" id="392391"/>
<dbReference type="KEGG" id="hsa:392391"/>
<dbReference type="MANE-Select" id="ENST00000373680.3">
    <property type="protein sequence ID" value="ENSP00000362784.2"/>
    <property type="RefSeq nucleotide sequence ID" value="NM_001001923.1"/>
    <property type="RefSeq protein sequence ID" value="NP_001001923.1"/>
</dbReference>
<dbReference type="UCSC" id="uc011lzd.2">
    <property type="organism name" value="human"/>
</dbReference>
<dbReference type="AGR" id="HGNC:8331"/>
<dbReference type="CTD" id="392391"/>
<dbReference type="GeneCards" id="OR5C1"/>
<dbReference type="HGNC" id="HGNC:8331">
    <property type="gene designation" value="OR5C1"/>
</dbReference>
<dbReference type="HPA" id="ENSG00000148215">
    <property type="expression patterns" value="Not detected"/>
</dbReference>
<dbReference type="neXtProt" id="NX_Q8NGR4"/>
<dbReference type="PharmGKB" id="PA32511"/>
<dbReference type="VEuPathDB" id="HostDB:ENSG00000148215"/>
<dbReference type="eggNOG" id="ENOG502RF3K">
    <property type="taxonomic scope" value="Eukaryota"/>
</dbReference>
<dbReference type="GeneTree" id="ENSGT01130000278309"/>
<dbReference type="HOGENOM" id="CLU_012526_1_0_1"/>
<dbReference type="InParanoid" id="Q8NGR4"/>
<dbReference type="OMA" id="FVHTTLT"/>
<dbReference type="OrthoDB" id="9439749at2759"/>
<dbReference type="PAN-GO" id="Q8NGR4">
    <property type="GO annotations" value="2 GO annotations based on evolutionary models"/>
</dbReference>
<dbReference type="PhylomeDB" id="Q8NGR4"/>
<dbReference type="TreeFam" id="TF352753"/>
<dbReference type="PathwayCommons" id="Q8NGR4"/>
<dbReference type="Reactome" id="R-HSA-9752946">
    <property type="pathway name" value="Expression and translocation of olfactory receptors"/>
</dbReference>
<dbReference type="BioGRID-ORCS" id="392391">
    <property type="hits" value="14 hits in 750 CRISPR screens"/>
</dbReference>
<dbReference type="GeneWiki" id="OR5C1"/>
<dbReference type="GenomeRNAi" id="392391"/>
<dbReference type="Pharos" id="Q8NGR4">
    <property type="development level" value="Tdark"/>
</dbReference>
<dbReference type="PRO" id="PR:Q8NGR4"/>
<dbReference type="Proteomes" id="UP000005640">
    <property type="component" value="Chromosome 9"/>
</dbReference>
<dbReference type="RNAct" id="Q8NGR4">
    <property type="molecule type" value="protein"/>
</dbReference>
<dbReference type="Bgee" id="ENSG00000148215">
    <property type="expression patterns" value="Expressed in sural nerve"/>
</dbReference>
<dbReference type="ExpressionAtlas" id="Q8NGR4">
    <property type="expression patterns" value="baseline and differential"/>
</dbReference>
<dbReference type="GO" id="GO:0005886">
    <property type="term" value="C:plasma membrane"/>
    <property type="evidence" value="ECO:0007669"/>
    <property type="project" value="UniProtKB-SubCell"/>
</dbReference>
<dbReference type="GO" id="GO:0004930">
    <property type="term" value="F:G protein-coupled receptor activity"/>
    <property type="evidence" value="ECO:0007669"/>
    <property type="project" value="UniProtKB-KW"/>
</dbReference>
<dbReference type="GO" id="GO:0005549">
    <property type="term" value="F:odorant binding"/>
    <property type="evidence" value="ECO:0000318"/>
    <property type="project" value="GO_Central"/>
</dbReference>
<dbReference type="GO" id="GO:0004984">
    <property type="term" value="F:olfactory receptor activity"/>
    <property type="evidence" value="ECO:0000318"/>
    <property type="project" value="GO_Central"/>
</dbReference>
<dbReference type="CDD" id="cd15945">
    <property type="entry name" value="7tmA_OR5C1-like"/>
    <property type="match status" value="1"/>
</dbReference>
<dbReference type="FunFam" id="1.10.1220.70:FF:000001">
    <property type="entry name" value="Olfactory receptor"/>
    <property type="match status" value="1"/>
</dbReference>
<dbReference type="FunFam" id="1.20.1070.10:FF:000003">
    <property type="entry name" value="Olfactory receptor"/>
    <property type="match status" value="1"/>
</dbReference>
<dbReference type="Gene3D" id="1.20.1070.10">
    <property type="entry name" value="Rhodopsin 7-helix transmembrane proteins"/>
    <property type="match status" value="1"/>
</dbReference>
<dbReference type="InterPro" id="IPR000276">
    <property type="entry name" value="GPCR_Rhodpsn"/>
</dbReference>
<dbReference type="InterPro" id="IPR017452">
    <property type="entry name" value="GPCR_Rhodpsn_7TM"/>
</dbReference>
<dbReference type="InterPro" id="IPR000725">
    <property type="entry name" value="Olfact_rcpt"/>
</dbReference>
<dbReference type="PANTHER" id="PTHR48018">
    <property type="entry name" value="OLFACTORY RECEPTOR"/>
    <property type="match status" value="1"/>
</dbReference>
<dbReference type="Pfam" id="PF13853">
    <property type="entry name" value="7tm_4"/>
    <property type="match status" value="1"/>
</dbReference>
<dbReference type="PRINTS" id="PR00237">
    <property type="entry name" value="GPCRRHODOPSN"/>
</dbReference>
<dbReference type="PRINTS" id="PR00245">
    <property type="entry name" value="OLFACTORYR"/>
</dbReference>
<dbReference type="SUPFAM" id="SSF81321">
    <property type="entry name" value="Family A G protein-coupled receptor-like"/>
    <property type="match status" value="1"/>
</dbReference>
<dbReference type="PROSITE" id="PS00237">
    <property type="entry name" value="G_PROTEIN_RECEP_F1_1"/>
    <property type="match status" value="1"/>
</dbReference>
<dbReference type="PROSITE" id="PS50262">
    <property type="entry name" value="G_PROTEIN_RECEP_F1_2"/>
    <property type="match status" value="1"/>
</dbReference>
<proteinExistence type="evidence at transcript level"/>
<gene>
    <name type="primary">OR5C1</name>
    <name type="synonym">OR5C2P</name>
</gene>
<organism>
    <name type="scientific">Homo sapiens</name>
    <name type="common">Human</name>
    <dbReference type="NCBI Taxonomy" id="9606"/>
    <lineage>
        <taxon>Eukaryota</taxon>
        <taxon>Metazoa</taxon>
        <taxon>Chordata</taxon>
        <taxon>Craniata</taxon>
        <taxon>Vertebrata</taxon>
        <taxon>Euteleostomi</taxon>
        <taxon>Mammalia</taxon>
        <taxon>Eutheria</taxon>
        <taxon>Euarchontoglires</taxon>
        <taxon>Primates</taxon>
        <taxon>Haplorrhini</taxon>
        <taxon>Catarrhini</taxon>
        <taxon>Hominidae</taxon>
        <taxon>Homo</taxon>
    </lineage>
</organism>
<keyword id="KW-1003">Cell membrane</keyword>
<keyword id="KW-1015">Disulfide bond</keyword>
<keyword id="KW-0297">G-protein coupled receptor</keyword>
<keyword id="KW-0325">Glycoprotein</keyword>
<keyword id="KW-0472">Membrane</keyword>
<keyword id="KW-0552">Olfaction</keyword>
<keyword id="KW-0675">Receptor</keyword>
<keyword id="KW-1185">Reference proteome</keyword>
<keyword id="KW-0716">Sensory transduction</keyword>
<keyword id="KW-0807">Transducer</keyword>
<keyword id="KW-0812">Transmembrane</keyword>
<keyword id="KW-1133">Transmembrane helix</keyword>
<sequence length="320" mass="34991">MNSENLTRAAVAPAEFVLLGITNRWDLRVALFLTCLPVYLVSLLGNMGMALLIRMDARLHTPMYFFLANLSLLDACYSSAIGPKMLVDLLLPRATIPYTACALQMFVFAGLADTECCLLAAMAYDRYVAIRNPLLYTTAMSQRLCLALLGASGLGGAVSAFVHTTLTFRLSFCRSRKINSFFCDIPPLLAISCSDTSLNELLLFAICGFIQTATVLAITVSYGFIAGAVIHMRSVEGSRRAASTGGSHLTAVAMMYGTLIFMYLRPSSSYALDTDKMASVFYTLVIPSLNPLIYSLRNKEVKEALRQTWSRFHCPGQGSQ</sequence>
<name>OR5C1_HUMAN</name>
<accession>Q8NGR4</accession>
<accession>B2RN54</accession>
<accession>B9EGT0</accession>
<accession>Q96RC4</accession>